<keyword id="KW-0143">Chaperone</keyword>
<keyword id="KW-0496">Mitochondrion</keyword>
<keyword id="KW-1185">Reference proteome</keyword>
<keyword id="KW-0809">Transit peptide</keyword>
<name>SDF2B_DROSI</name>
<dbReference type="EMBL" id="CM000362">
    <property type="protein sequence ID" value="EDX06498.1"/>
    <property type="molecule type" value="Genomic_DNA"/>
</dbReference>
<dbReference type="SMR" id="B4QID8"/>
<dbReference type="STRING" id="7240.B4QID8"/>
<dbReference type="HOGENOM" id="CLU_103054_0_3_1"/>
<dbReference type="OMA" id="DTEIMRM"/>
<dbReference type="OrthoDB" id="284292at2759"/>
<dbReference type="PhylomeDB" id="B4QID8"/>
<dbReference type="Proteomes" id="UP000000304">
    <property type="component" value="Chromosome 2R"/>
</dbReference>
<dbReference type="GO" id="GO:0005759">
    <property type="term" value="C:mitochondrial matrix"/>
    <property type="evidence" value="ECO:0007669"/>
    <property type="project" value="UniProtKB-SubCell"/>
</dbReference>
<dbReference type="GO" id="GO:0005739">
    <property type="term" value="C:mitochondrion"/>
    <property type="evidence" value="ECO:0000250"/>
    <property type="project" value="UniProtKB"/>
</dbReference>
<dbReference type="GO" id="GO:0006121">
    <property type="term" value="P:mitochondrial electron transport, succinate to ubiquinone"/>
    <property type="evidence" value="ECO:0000250"/>
    <property type="project" value="UniProtKB"/>
</dbReference>
<dbReference type="GO" id="GO:0034553">
    <property type="term" value="P:mitochondrial respiratory chain complex II assembly"/>
    <property type="evidence" value="ECO:0007669"/>
    <property type="project" value="TreeGrafter"/>
</dbReference>
<dbReference type="GO" id="GO:0018293">
    <property type="term" value="P:protein-FAD linkage"/>
    <property type="evidence" value="ECO:0000250"/>
    <property type="project" value="UniProtKB"/>
</dbReference>
<dbReference type="GO" id="GO:0006099">
    <property type="term" value="P:tricarboxylic acid cycle"/>
    <property type="evidence" value="ECO:0007669"/>
    <property type="project" value="TreeGrafter"/>
</dbReference>
<dbReference type="FunFam" id="1.10.150.250:FF:000002">
    <property type="entry name" value="Succinate dehydrogenase assembly factor 2, mitochondrial"/>
    <property type="match status" value="1"/>
</dbReference>
<dbReference type="Gene3D" id="1.10.150.250">
    <property type="entry name" value="Flavinator of succinate dehydrogenase"/>
    <property type="match status" value="1"/>
</dbReference>
<dbReference type="HAMAP" id="MF_03057">
    <property type="entry name" value="SDHAF2"/>
    <property type="match status" value="1"/>
</dbReference>
<dbReference type="InterPro" id="IPR005631">
    <property type="entry name" value="SDH"/>
</dbReference>
<dbReference type="InterPro" id="IPR036714">
    <property type="entry name" value="SDH_sf"/>
</dbReference>
<dbReference type="InterPro" id="IPR028882">
    <property type="entry name" value="SDHAF2"/>
</dbReference>
<dbReference type="PANTHER" id="PTHR12469">
    <property type="entry name" value="PROTEIN EMI5 HOMOLOG, MITOCHONDRIAL"/>
    <property type="match status" value="1"/>
</dbReference>
<dbReference type="PANTHER" id="PTHR12469:SF2">
    <property type="entry name" value="SUCCINATE DEHYDROGENASE ASSEMBLY FACTOR 2, MITOCHONDRIAL"/>
    <property type="match status" value="1"/>
</dbReference>
<dbReference type="Pfam" id="PF03937">
    <property type="entry name" value="Sdh5"/>
    <property type="match status" value="1"/>
</dbReference>
<dbReference type="SUPFAM" id="SSF109910">
    <property type="entry name" value="YgfY-like"/>
    <property type="match status" value="1"/>
</dbReference>
<feature type="transit peptide" description="Mitochondrion" evidence="1">
    <location>
        <begin position="1"/>
        <end position="24"/>
    </location>
</feature>
<feature type="chain" id="PRO_0000383178" description="Succinate dehydrogenase assembly factor 2-B, mitochondrial">
    <location>
        <begin position="25"/>
        <end position="156"/>
    </location>
</feature>
<sequence>MLRQFIVSTVGRRLQLPMMAQSRLASNLDKTEYTTPGEIVDYDDPPHLPVPEYPVRPDEPLEIRKQRLLYQSRKRGMLENDLLLSTFVAKHLKDFNAEQTAEYDQLINGVSNDWDIFYWATDTKPTPPQFDTEIMRLLKEHVKNHEKVQRIRQPDL</sequence>
<evidence type="ECO:0000255" key="1">
    <source>
        <dbReference type="HAMAP-Rule" id="MF_03057"/>
    </source>
</evidence>
<organism>
    <name type="scientific">Drosophila simulans</name>
    <name type="common">Fruit fly</name>
    <dbReference type="NCBI Taxonomy" id="7240"/>
    <lineage>
        <taxon>Eukaryota</taxon>
        <taxon>Metazoa</taxon>
        <taxon>Ecdysozoa</taxon>
        <taxon>Arthropoda</taxon>
        <taxon>Hexapoda</taxon>
        <taxon>Insecta</taxon>
        <taxon>Pterygota</taxon>
        <taxon>Neoptera</taxon>
        <taxon>Endopterygota</taxon>
        <taxon>Diptera</taxon>
        <taxon>Brachycera</taxon>
        <taxon>Muscomorpha</taxon>
        <taxon>Ephydroidea</taxon>
        <taxon>Drosophilidae</taxon>
        <taxon>Drosophila</taxon>
        <taxon>Sophophora</taxon>
    </lineage>
</organism>
<reference key="1">
    <citation type="journal article" date="2007" name="Nature">
        <title>Evolution of genes and genomes on the Drosophila phylogeny.</title>
        <authorList>
            <consortium name="Drosophila 12 genomes consortium"/>
        </authorList>
    </citation>
    <scope>NUCLEOTIDE SEQUENCE [LARGE SCALE GENOMIC DNA]</scope>
</reference>
<gene>
    <name type="ORF">GD25982</name>
</gene>
<proteinExistence type="inferred from homology"/>
<protein>
    <recommendedName>
        <fullName evidence="1">Succinate dehydrogenase assembly factor 2-B, mitochondrial</fullName>
        <shortName evidence="1">SDH assembly factor 2-B</shortName>
        <shortName evidence="1">SDHAF2-B</shortName>
    </recommendedName>
</protein>
<accession>B4QID8</accession>
<comment type="function">
    <text evidence="1">Plays an essential role in the assembly of succinate dehydrogenase (SDH), an enzyme complex (also referred to as respiratory complex II) that is a component of both the tricarboxylic acid (TCA) cycle and the mitochondrial electron transport chain, and which couples the oxidation of succinate to fumarate with the reduction of ubiquinone (coenzyme Q) to ubiquinol. Required for flavinylation (covalent attachment of FAD) of the flavoprotein subunit of the SDH catalytic dimer.</text>
</comment>
<comment type="subunit">
    <text evidence="1">Interacts with the flavoprotein subunit within the SDH catalytic dimer.</text>
</comment>
<comment type="subcellular location">
    <subcellularLocation>
        <location evidence="1">Mitochondrion matrix</location>
    </subcellularLocation>
</comment>
<comment type="similarity">
    <text evidence="1">Belongs to the SDHAF2 family.</text>
</comment>